<comment type="function">
    <text evidence="2">Catalyzes the formation of N(7)-methylguanine at position 46 (m7G46) in tRNA.</text>
</comment>
<comment type="catalytic activity">
    <reaction evidence="2">
        <text>guanosine(46) in tRNA + S-adenosyl-L-methionine = N(7)-methylguanosine(46) in tRNA + S-adenosyl-L-homocysteine</text>
        <dbReference type="Rhea" id="RHEA:42708"/>
        <dbReference type="Rhea" id="RHEA-COMP:10188"/>
        <dbReference type="Rhea" id="RHEA-COMP:10189"/>
        <dbReference type="ChEBI" id="CHEBI:57856"/>
        <dbReference type="ChEBI" id="CHEBI:59789"/>
        <dbReference type="ChEBI" id="CHEBI:74269"/>
        <dbReference type="ChEBI" id="CHEBI:74480"/>
        <dbReference type="EC" id="2.1.1.33"/>
    </reaction>
</comment>
<comment type="pathway">
    <text evidence="2">tRNA modification; N(7)-methylguanine-tRNA biosynthesis.</text>
</comment>
<comment type="similarity">
    <text evidence="2">Belongs to the class I-like SAM-binding methyltransferase superfamily. TrmB family.</text>
</comment>
<protein>
    <recommendedName>
        <fullName evidence="2">tRNA (guanine-N(7)-)-methyltransferase</fullName>
        <ecNumber evidence="2">2.1.1.33</ecNumber>
    </recommendedName>
    <alternativeName>
        <fullName evidence="2">tRNA (guanine(46)-N(7))-methyltransferase</fullName>
    </alternativeName>
    <alternativeName>
        <fullName evidence="2">tRNA(m7G46)-methyltransferase</fullName>
    </alternativeName>
</protein>
<feature type="chain" id="PRO_1000064399" description="tRNA (guanine-N(7)-)-methyltransferase">
    <location>
        <begin position="1"/>
        <end position="213"/>
    </location>
</feature>
<feature type="active site" evidence="1">
    <location>
        <position position="118"/>
    </location>
</feature>
<feature type="binding site" evidence="2">
    <location>
        <position position="44"/>
    </location>
    <ligand>
        <name>S-adenosyl-L-methionine</name>
        <dbReference type="ChEBI" id="CHEBI:59789"/>
    </ligand>
</feature>
<feature type="binding site" evidence="2">
    <location>
        <position position="69"/>
    </location>
    <ligand>
        <name>S-adenosyl-L-methionine</name>
        <dbReference type="ChEBI" id="CHEBI:59789"/>
    </ligand>
</feature>
<feature type="binding site" evidence="2">
    <location>
        <position position="96"/>
    </location>
    <ligand>
        <name>S-adenosyl-L-methionine</name>
        <dbReference type="ChEBI" id="CHEBI:59789"/>
    </ligand>
</feature>
<feature type="binding site" evidence="2">
    <location>
        <position position="118"/>
    </location>
    <ligand>
        <name>S-adenosyl-L-methionine</name>
        <dbReference type="ChEBI" id="CHEBI:59789"/>
    </ligand>
</feature>
<feature type="binding site" evidence="2">
    <location>
        <position position="122"/>
    </location>
    <ligand>
        <name>substrate</name>
    </ligand>
</feature>
<feature type="binding site" evidence="2">
    <location>
        <position position="154"/>
    </location>
    <ligand>
        <name>substrate</name>
    </ligand>
</feature>
<feature type="binding site" evidence="2">
    <location>
        <begin position="192"/>
        <end position="195"/>
    </location>
    <ligand>
        <name>substrate</name>
    </ligand>
</feature>
<proteinExistence type="inferred from homology"/>
<name>TRMB_LIMRD</name>
<keyword id="KW-0489">Methyltransferase</keyword>
<keyword id="KW-1185">Reference proteome</keyword>
<keyword id="KW-0949">S-adenosyl-L-methionine</keyword>
<keyword id="KW-0808">Transferase</keyword>
<keyword id="KW-0819">tRNA processing</keyword>
<gene>
    <name evidence="2" type="primary">trmB</name>
    <name type="ordered locus">Lreu_1260</name>
</gene>
<organism>
    <name type="scientific">Limosilactobacillus reuteri (strain DSM 20016)</name>
    <name type="common">Lactobacillus reuteri</name>
    <dbReference type="NCBI Taxonomy" id="557436"/>
    <lineage>
        <taxon>Bacteria</taxon>
        <taxon>Bacillati</taxon>
        <taxon>Bacillota</taxon>
        <taxon>Bacilli</taxon>
        <taxon>Lactobacillales</taxon>
        <taxon>Lactobacillaceae</taxon>
        <taxon>Limosilactobacillus</taxon>
    </lineage>
</organism>
<evidence type="ECO:0000250" key="1"/>
<evidence type="ECO:0000255" key="2">
    <source>
        <dbReference type="HAMAP-Rule" id="MF_01057"/>
    </source>
</evidence>
<accession>A5VKZ3</accession>
<sequence length="213" mass="24675">MRVKHKKWADPLIAAHPELMIDDATQFKGKWQSRFAKEQPLHLEVGMGKGQFIIGMAKDHPEINFIGLEIQRTVAAIALKKALEEDLPNLQLICGDGEDLQEYFEDGEVAKMYLNFSDPWPKKRHAKRRLTYKTFLATYQQILQDQGAIELKTDNMGLFEFSLESMNNYGMIFDGVWLDLHHSEENEHNVETEYEQKFAAKGQPIYKLIANFK</sequence>
<reference key="1">
    <citation type="journal article" date="2011" name="PLoS Genet.">
        <title>The evolution of host specialization in the vertebrate gut symbiont Lactobacillus reuteri.</title>
        <authorList>
            <person name="Frese S.A."/>
            <person name="Benson A.K."/>
            <person name="Tannock G.W."/>
            <person name="Loach D.M."/>
            <person name="Kim J."/>
            <person name="Zhang M."/>
            <person name="Oh P.L."/>
            <person name="Heng N.C."/>
            <person name="Patil P.B."/>
            <person name="Juge N."/>
            <person name="Mackenzie D.A."/>
            <person name="Pearson B.M."/>
            <person name="Lapidus A."/>
            <person name="Dalin E."/>
            <person name="Tice H."/>
            <person name="Goltsman E."/>
            <person name="Land M."/>
            <person name="Hauser L."/>
            <person name="Ivanova N."/>
            <person name="Kyrpides N.C."/>
            <person name="Walter J."/>
        </authorList>
    </citation>
    <scope>NUCLEOTIDE SEQUENCE [LARGE SCALE GENOMIC DNA]</scope>
    <source>
        <strain>DSM 20016</strain>
    </source>
</reference>
<dbReference type="EC" id="2.1.1.33" evidence="2"/>
<dbReference type="EMBL" id="CP000705">
    <property type="protein sequence ID" value="ABQ83517.1"/>
    <property type="molecule type" value="Genomic_DNA"/>
</dbReference>
<dbReference type="RefSeq" id="WP_003668507.1">
    <property type="nucleotide sequence ID" value="NC_009513.1"/>
</dbReference>
<dbReference type="SMR" id="A5VKZ3"/>
<dbReference type="STRING" id="557436.Lreu_1260"/>
<dbReference type="KEGG" id="lre:Lreu_1260"/>
<dbReference type="eggNOG" id="COG0220">
    <property type="taxonomic scope" value="Bacteria"/>
</dbReference>
<dbReference type="HOGENOM" id="CLU_050910_2_1_9"/>
<dbReference type="UniPathway" id="UPA00989"/>
<dbReference type="Proteomes" id="UP000001991">
    <property type="component" value="Chromosome"/>
</dbReference>
<dbReference type="GO" id="GO:0043527">
    <property type="term" value="C:tRNA methyltransferase complex"/>
    <property type="evidence" value="ECO:0007669"/>
    <property type="project" value="TreeGrafter"/>
</dbReference>
<dbReference type="GO" id="GO:0008176">
    <property type="term" value="F:tRNA (guanine(46)-N7)-methyltransferase activity"/>
    <property type="evidence" value="ECO:0007669"/>
    <property type="project" value="UniProtKB-UniRule"/>
</dbReference>
<dbReference type="CDD" id="cd02440">
    <property type="entry name" value="AdoMet_MTases"/>
    <property type="match status" value="1"/>
</dbReference>
<dbReference type="FunFam" id="3.40.50.150:FF:000035">
    <property type="entry name" value="tRNA (guanine-N(7)-)-methyltransferase"/>
    <property type="match status" value="1"/>
</dbReference>
<dbReference type="Gene3D" id="3.40.50.150">
    <property type="entry name" value="Vaccinia Virus protein VP39"/>
    <property type="match status" value="1"/>
</dbReference>
<dbReference type="HAMAP" id="MF_01057">
    <property type="entry name" value="tRNA_methyltr_TrmB"/>
    <property type="match status" value="1"/>
</dbReference>
<dbReference type="InterPro" id="IPR029063">
    <property type="entry name" value="SAM-dependent_MTases_sf"/>
</dbReference>
<dbReference type="InterPro" id="IPR003358">
    <property type="entry name" value="tRNA_(Gua-N-7)_MeTrfase_Trmb"/>
</dbReference>
<dbReference type="InterPro" id="IPR055361">
    <property type="entry name" value="tRNA_methyltr_TrmB_bact"/>
</dbReference>
<dbReference type="NCBIfam" id="NF001080">
    <property type="entry name" value="PRK00121.2-2"/>
    <property type="match status" value="1"/>
</dbReference>
<dbReference type="NCBIfam" id="TIGR00091">
    <property type="entry name" value="tRNA (guanosine(46)-N7)-methyltransferase TrmB"/>
    <property type="match status" value="1"/>
</dbReference>
<dbReference type="PANTHER" id="PTHR23417">
    <property type="entry name" value="3-DEOXY-D-MANNO-OCTULOSONIC-ACID TRANSFERASE/TRNA GUANINE-N 7 - -METHYLTRANSFERASE"/>
    <property type="match status" value="1"/>
</dbReference>
<dbReference type="PANTHER" id="PTHR23417:SF14">
    <property type="entry name" value="PENTACOTRIPEPTIDE-REPEAT REGION OF PRORP DOMAIN-CONTAINING PROTEIN"/>
    <property type="match status" value="1"/>
</dbReference>
<dbReference type="Pfam" id="PF02390">
    <property type="entry name" value="Methyltransf_4"/>
    <property type="match status" value="1"/>
</dbReference>
<dbReference type="SUPFAM" id="SSF53335">
    <property type="entry name" value="S-adenosyl-L-methionine-dependent methyltransferases"/>
    <property type="match status" value="1"/>
</dbReference>
<dbReference type="PROSITE" id="PS51625">
    <property type="entry name" value="SAM_MT_TRMB"/>
    <property type="match status" value="1"/>
</dbReference>